<comment type="function">
    <text evidence="1">DNA-dependent RNA polymerase catalyzes the transcription of DNA into RNA using the four ribonucleoside triphosphates as substrates.</text>
</comment>
<comment type="catalytic activity">
    <reaction evidence="1">
        <text>RNA(n) + a ribonucleoside 5'-triphosphate = RNA(n+1) + diphosphate</text>
        <dbReference type="Rhea" id="RHEA:21248"/>
        <dbReference type="Rhea" id="RHEA-COMP:14527"/>
        <dbReference type="Rhea" id="RHEA-COMP:17342"/>
        <dbReference type="ChEBI" id="CHEBI:33019"/>
        <dbReference type="ChEBI" id="CHEBI:61557"/>
        <dbReference type="ChEBI" id="CHEBI:140395"/>
        <dbReference type="EC" id="2.7.7.6"/>
    </reaction>
</comment>
<comment type="cofactor">
    <cofactor evidence="1">
        <name>Mg(2+)</name>
        <dbReference type="ChEBI" id="CHEBI:18420"/>
    </cofactor>
    <text evidence="1">Binds 1 Mg(2+) ion per subunit.</text>
</comment>
<comment type="cofactor">
    <cofactor evidence="1">
        <name>Zn(2+)</name>
        <dbReference type="ChEBI" id="CHEBI:29105"/>
    </cofactor>
    <text evidence="1">Binds 2 Zn(2+) ions per subunit.</text>
</comment>
<comment type="subunit">
    <text evidence="1">The RNAP catalytic core consists of 2 alpha, 1 beta, 1 beta' and 1 omega subunit. When a sigma factor is associated with the core the holoenzyme is formed, which can initiate transcription.</text>
</comment>
<comment type="similarity">
    <text evidence="1">Belongs to the RNA polymerase beta' chain family.</text>
</comment>
<proteinExistence type="inferred from homology"/>
<gene>
    <name evidence="1" type="primary">rpoC</name>
    <name type="ordered locus">BCI_0503</name>
</gene>
<protein>
    <recommendedName>
        <fullName evidence="1">DNA-directed RNA polymerase subunit beta'</fullName>
        <shortName evidence="1">RNAP subunit beta'</shortName>
        <ecNumber evidence="1">2.7.7.6</ecNumber>
    </recommendedName>
    <alternativeName>
        <fullName evidence="1">RNA polymerase subunit beta'</fullName>
    </alternativeName>
    <alternativeName>
        <fullName evidence="1">Transcriptase subunit beta'</fullName>
    </alternativeName>
</protein>
<name>RPOC_BAUCH</name>
<accession>Q1LSX6</accession>
<feature type="chain" id="PRO_0000353297" description="DNA-directed RNA polymerase subunit beta'">
    <location>
        <begin position="1"/>
        <end position="1408"/>
    </location>
</feature>
<feature type="binding site" evidence="1">
    <location>
        <position position="70"/>
    </location>
    <ligand>
        <name>Zn(2+)</name>
        <dbReference type="ChEBI" id="CHEBI:29105"/>
        <label>1</label>
    </ligand>
</feature>
<feature type="binding site" evidence="1">
    <location>
        <position position="72"/>
    </location>
    <ligand>
        <name>Zn(2+)</name>
        <dbReference type="ChEBI" id="CHEBI:29105"/>
        <label>1</label>
    </ligand>
</feature>
<feature type="binding site" evidence="1">
    <location>
        <position position="85"/>
    </location>
    <ligand>
        <name>Zn(2+)</name>
        <dbReference type="ChEBI" id="CHEBI:29105"/>
        <label>1</label>
    </ligand>
</feature>
<feature type="binding site" evidence="1">
    <location>
        <position position="88"/>
    </location>
    <ligand>
        <name>Zn(2+)</name>
        <dbReference type="ChEBI" id="CHEBI:29105"/>
        <label>1</label>
    </ligand>
</feature>
<feature type="binding site" evidence="1">
    <location>
        <position position="460"/>
    </location>
    <ligand>
        <name>Mg(2+)</name>
        <dbReference type="ChEBI" id="CHEBI:18420"/>
    </ligand>
</feature>
<feature type="binding site" evidence="1">
    <location>
        <position position="462"/>
    </location>
    <ligand>
        <name>Mg(2+)</name>
        <dbReference type="ChEBI" id="CHEBI:18420"/>
    </ligand>
</feature>
<feature type="binding site" evidence="1">
    <location>
        <position position="464"/>
    </location>
    <ligand>
        <name>Mg(2+)</name>
        <dbReference type="ChEBI" id="CHEBI:18420"/>
    </ligand>
</feature>
<feature type="binding site" evidence="1">
    <location>
        <position position="814"/>
    </location>
    <ligand>
        <name>Zn(2+)</name>
        <dbReference type="ChEBI" id="CHEBI:29105"/>
        <label>2</label>
    </ligand>
</feature>
<feature type="binding site" evidence="1">
    <location>
        <position position="888"/>
    </location>
    <ligand>
        <name>Zn(2+)</name>
        <dbReference type="ChEBI" id="CHEBI:29105"/>
        <label>2</label>
    </ligand>
</feature>
<feature type="binding site" evidence="1">
    <location>
        <position position="895"/>
    </location>
    <ligand>
        <name>Zn(2+)</name>
        <dbReference type="ChEBI" id="CHEBI:29105"/>
        <label>2</label>
    </ligand>
</feature>
<feature type="binding site" evidence="1">
    <location>
        <position position="898"/>
    </location>
    <ligand>
        <name>Zn(2+)</name>
        <dbReference type="ChEBI" id="CHEBI:29105"/>
        <label>2</label>
    </ligand>
</feature>
<dbReference type="EC" id="2.7.7.6" evidence="1"/>
<dbReference type="EMBL" id="CP000238">
    <property type="protein sequence ID" value="ABF13977.1"/>
    <property type="molecule type" value="Genomic_DNA"/>
</dbReference>
<dbReference type="RefSeq" id="WP_011520671.1">
    <property type="nucleotide sequence ID" value="NC_007984.1"/>
</dbReference>
<dbReference type="SMR" id="Q1LSX6"/>
<dbReference type="STRING" id="374463.BCI_0503"/>
<dbReference type="KEGG" id="bci:BCI_0503"/>
<dbReference type="HOGENOM" id="CLU_000524_3_1_6"/>
<dbReference type="OrthoDB" id="9815296at2"/>
<dbReference type="Proteomes" id="UP000002427">
    <property type="component" value="Chromosome"/>
</dbReference>
<dbReference type="GO" id="GO:0000428">
    <property type="term" value="C:DNA-directed RNA polymerase complex"/>
    <property type="evidence" value="ECO:0007669"/>
    <property type="project" value="UniProtKB-KW"/>
</dbReference>
<dbReference type="GO" id="GO:0003677">
    <property type="term" value="F:DNA binding"/>
    <property type="evidence" value="ECO:0007669"/>
    <property type="project" value="UniProtKB-UniRule"/>
</dbReference>
<dbReference type="GO" id="GO:0003899">
    <property type="term" value="F:DNA-directed RNA polymerase activity"/>
    <property type="evidence" value="ECO:0007669"/>
    <property type="project" value="UniProtKB-UniRule"/>
</dbReference>
<dbReference type="GO" id="GO:0000287">
    <property type="term" value="F:magnesium ion binding"/>
    <property type="evidence" value="ECO:0007669"/>
    <property type="project" value="UniProtKB-UniRule"/>
</dbReference>
<dbReference type="GO" id="GO:0008270">
    <property type="term" value="F:zinc ion binding"/>
    <property type="evidence" value="ECO:0007669"/>
    <property type="project" value="UniProtKB-UniRule"/>
</dbReference>
<dbReference type="GO" id="GO:0006351">
    <property type="term" value="P:DNA-templated transcription"/>
    <property type="evidence" value="ECO:0007669"/>
    <property type="project" value="UniProtKB-UniRule"/>
</dbReference>
<dbReference type="CDD" id="cd02655">
    <property type="entry name" value="RNAP_beta'_C"/>
    <property type="match status" value="1"/>
</dbReference>
<dbReference type="CDD" id="cd01609">
    <property type="entry name" value="RNAP_beta'_N"/>
    <property type="match status" value="1"/>
</dbReference>
<dbReference type="FunFam" id="1.10.132.30:FF:000003">
    <property type="entry name" value="DNA-directed RNA polymerase subunit beta"/>
    <property type="match status" value="1"/>
</dbReference>
<dbReference type="FunFam" id="1.10.150.390:FF:000002">
    <property type="entry name" value="DNA-directed RNA polymerase subunit beta"/>
    <property type="match status" value="1"/>
</dbReference>
<dbReference type="FunFam" id="1.10.274.100:FF:000002">
    <property type="entry name" value="DNA-directed RNA polymerase subunit beta"/>
    <property type="match status" value="1"/>
</dbReference>
<dbReference type="FunFam" id="1.10.40.90:FF:000001">
    <property type="entry name" value="DNA-directed RNA polymerase subunit beta"/>
    <property type="match status" value="1"/>
</dbReference>
<dbReference type="FunFam" id="2.40.50.100:FF:000016">
    <property type="entry name" value="DNA-directed RNA polymerase subunit beta"/>
    <property type="match status" value="1"/>
</dbReference>
<dbReference type="FunFam" id="4.10.860.120:FF:000001">
    <property type="entry name" value="DNA-directed RNA polymerase subunit beta"/>
    <property type="match status" value="1"/>
</dbReference>
<dbReference type="Gene3D" id="1.10.132.30">
    <property type="match status" value="1"/>
</dbReference>
<dbReference type="Gene3D" id="1.10.150.390">
    <property type="match status" value="1"/>
</dbReference>
<dbReference type="Gene3D" id="1.10.1790.20">
    <property type="match status" value="1"/>
</dbReference>
<dbReference type="Gene3D" id="1.10.40.90">
    <property type="match status" value="1"/>
</dbReference>
<dbReference type="Gene3D" id="2.40.40.20">
    <property type="match status" value="1"/>
</dbReference>
<dbReference type="Gene3D" id="2.40.50.100">
    <property type="match status" value="3"/>
</dbReference>
<dbReference type="Gene3D" id="4.10.860.120">
    <property type="entry name" value="RNA polymerase II, clamp domain"/>
    <property type="match status" value="1"/>
</dbReference>
<dbReference type="Gene3D" id="1.10.274.100">
    <property type="entry name" value="RNA polymerase Rpb1, domain 3"/>
    <property type="match status" value="1"/>
</dbReference>
<dbReference type="HAMAP" id="MF_01322">
    <property type="entry name" value="RNApol_bact_RpoC"/>
    <property type="match status" value="1"/>
</dbReference>
<dbReference type="InterPro" id="IPR045867">
    <property type="entry name" value="DNA-dir_RpoC_beta_prime"/>
</dbReference>
<dbReference type="InterPro" id="IPR012754">
    <property type="entry name" value="DNA-dir_RpoC_beta_prime_bact"/>
</dbReference>
<dbReference type="InterPro" id="IPR000722">
    <property type="entry name" value="RNA_pol_asu"/>
</dbReference>
<dbReference type="InterPro" id="IPR006592">
    <property type="entry name" value="RNA_pol_N"/>
</dbReference>
<dbReference type="InterPro" id="IPR007080">
    <property type="entry name" value="RNA_pol_Rpb1_1"/>
</dbReference>
<dbReference type="InterPro" id="IPR007066">
    <property type="entry name" value="RNA_pol_Rpb1_3"/>
</dbReference>
<dbReference type="InterPro" id="IPR042102">
    <property type="entry name" value="RNA_pol_Rpb1_3_sf"/>
</dbReference>
<dbReference type="InterPro" id="IPR007083">
    <property type="entry name" value="RNA_pol_Rpb1_4"/>
</dbReference>
<dbReference type="InterPro" id="IPR007081">
    <property type="entry name" value="RNA_pol_Rpb1_5"/>
</dbReference>
<dbReference type="InterPro" id="IPR044893">
    <property type="entry name" value="RNA_pol_Rpb1_clamp_domain"/>
</dbReference>
<dbReference type="InterPro" id="IPR038120">
    <property type="entry name" value="Rpb1_funnel_sf"/>
</dbReference>
<dbReference type="NCBIfam" id="TIGR02386">
    <property type="entry name" value="rpoC_TIGR"/>
    <property type="match status" value="1"/>
</dbReference>
<dbReference type="PANTHER" id="PTHR19376">
    <property type="entry name" value="DNA-DIRECTED RNA POLYMERASE"/>
    <property type="match status" value="1"/>
</dbReference>
<dbReference type="PANTHER" id="PTHR19376:SF54">
    <property type="entry name" value="DNA-DIRECTED RNA POLYMERASE SUBUNIT BETA"/>
    <property type="match status" value="1"/>
</dbReference>
<dbReference type="Pfam" id="PF04997">
    <property type="entry name" value="RNA_pol_Rpb1_1"/>
    <property type="match status" value="1"/>
</dbReference>
<dbReference type="Pfam" id="PF00623">
    <property type="entry name" value="RNA_pol_Rpb1_2"/>
    <property type="match status" value="2"/>
</dbReference>
<dbReference type="Pfam" id="PF04983">
    <property type="entry name" value="RNA_pol_Rpb1_3"/>
    <property type="match status" value="1"/>
</dbReference>
<dbReference type="Pfam" id="PF05000">
    <property type="entry name" value="RNA_pol_Rpb1_4"/>
    <property type="match status" value="1"/>
</dbReference>
<dbReference type="Pfam" id="PF04998">
    <property type="entry name" value="RNA_pol_Rpb1_5"/>
    <property type="match status" value="1"/>
</dbReference>
<dbReference type="SMART" id="SM00663">
    <property type="entry name" value="RPOLA_N"/>
    <property type="match status" value="1"/>
</dbReference>
<dbReference type="SUPFAM" id="SSF64484">
    <property type="entry name" value="beta and beta-prime subunits of DNA dependent RNA-polymerase"/>
    <property type="match status" value="1"/>
</dbReference>
<keyword id="KW-0240">DNA-directed RNA polymerase</keyword>
<keyword id="KW-0460">Magnesium</keyword>
<keyword id="KW-0479">Metal-binding</keyword>
<keyword id="KW-0548">Nucleotidyltransferase</keyword>
<keyword id="KW-1185">Reference proteome</keyword>
<keyword id="KW-0804">Transcription</keyword>
<keyword id="KW-0808">Transferase</keyword>
<keyword id="KW-0862">Zinc</keyword>
<evidence type="ECO:0000255" key="1">
    <source>
        <dbReference type="HAMAP-Rule" id="MF_01322"/>
    </source>
</evidence>
<reference key="1">
    <citation type="journal article" date="2006" name="PLoS Biol.">
        <title>Metabolic complementarity and genomics of the dual bacterial symbiosis of sharpshooters.</title>
        <authorList>
            <person name="Wu D."/>
            <person name="Daugherty S.C."/>
            <person name="Van Aken S.E."/>
            <person name="Pai G.H."/>
            <person name="Watkins K.L."/>
            <person name="Khouri H."/>
            <person name="Tallon L.J."/>
            <person name="Zaborsky J.M."/>
            <person name="Dunbar H.E."/>
            <person name="Tran P.L."/>
            <person name="Moran N.A."/>
            <person name="Eisen J.A."/>
        </authorList>
    </citation>
    <scope>NUCLEOTIDE SEQUENCE [LARGE SCALE GENOMIC DNA]</scope>
</reference>
<sequence>MKDLFKLLKAQAKTEEFDAIKIALASPDMIRSWSFGEVKKPETINYRTFKPERDGLFCARIFGPVKDYECLCGKYKRLKHRGVICEKCGVEVTQTKVRRERMGHIELASPTAHIWFLKSLPSRIGLLLDMPLRDIERVLYFESYVVVEGGMTYLERNQILTEEQYLDALEEFGDEFDAKMGAEAIHHLLKNMDLEQECEQLREEIVDVSSETKRKKLTKRIKLLESFVHSGNKPEWMILNVLPVLPPDLRPLVPLDGGRFATSDLNDLYRRVINRNNRLKRLLDLSAPDIIVRNEKRMLQEAVDALLDNGRRGRVITSSNKRPLKSLADMIKGKQGRFRQNLLGKRVDYSGRSVITVGPYLRLHQCGLPKKMALELFKPFIYGKLEICGLATTIKAAKKMVEREEAVVWDVLDEVIREHPVMLNRAPTLHRLGIQAFEPVLVEGKAIQLHPLVCAAYNADFDGDQMAVHIPLTLEAQLEARALMMSTNNILSPANGEPIIVPSQDVVLGLYYMTRDRVNSKGEGMILTGPKEAEKIYHAGIAELHARVKVRITEYEKIDDNELVEKKQIIDTTIGRAILWMIVPKGLPFDLVNQVLGKKSISKMLNTCYRILGLKPTVIFADQIMYTGFAYAARSGSSVGIDDMVIPAHKAEIIDDAENEVAEIQEQFQSGLVTAGERYNKVIDIWAAANERVAKAMMDNLSTEVVLNCHGKEELQVSFNNIFMMSDSGARGSAAQIRQLAGMRGLMAKPDGSIIETPITANFREGLNVLQYFISTHGARKGLADTALKTANSGYLTRRLVDVAQDLVVTEEDCGTLSGIVMTPVIEGGDVKESLRERVLGRVTTENILQPGKTDILVKRNTLLNEQWCDILEEHSVDNIKVRSVVTCDADFGVCAYCYGRDLARGHLVNKGEAIGVIAAQSIGEPGTQLTMRTFHIGGAAFRAAAESSIQVKNHGILCLVNAKFVINSANKIVITSRNAELKISDEFGRTKESYKVPYGAIMAKGDGANIISGETIANWDPHTMPVITEVNGFIRFTDMIEGQTIIRQTDELTGLSSIVILDTAERTSSGKDLRPALKIVDANQQDILIPGTDMPAQYFLPGKTIVQLEDGTKITSGDTLARLPQETSGTKDITGGLPRVADLFEARIPKEPAILAEASGIISFGKDTKGKRRLVISSLHSNDSYEEMIPKWRQLNVFEGERVERGDVISDGPESPHDILRLRGVHAVTRYIINEVQDVYRLQGVRINDKHIEVIVRQMLRKATIINAGGSDLLEGEQVEYSRIKIINRQLKSEGRQEITYVRDLLGITKASLATESFISAASFQETTRVLTEASVAGKRDDLRGLKENVIVGRLIPAGTGYAYHQERARYSKHREEALDMQQITAADEASANLAELLNSSLTNHKH</sequence>
<organism>
    <name type="scientific">Baumannia cicadellinicola subsp. Homalodisca coagulata</name>
    <dbReference type="NCBI Taxonomy" id="374463"/>
    <lineage>
        <taxon>Bacteria</taxon>
        <taxon>Pseudomonadati</taxon>
        <taxon>Pseudomonadota</taxon>
        <taxon>Gammaproteobacteria</taxon>
        <taxon>Candidatus Palibaumannia</taxon>
    </lineage>
</organism>